<proteinExistence type="inferred from homology"/>
<name>PNP_SYNS3</name>
<reference key="1">
    <citation type="journal article" date="2006" name="Proc. Natl. Acad. Sci. U.S.A.">
        <title>Genome sequence of Synechococcus CC9311: insights into adaptation to a coastal environment.</title>
        <authorList>
            <person name="Palenik B."/>
            <person name="Ren Q."/>
            <person name="Dupont C.L."/>
            <person name="Myers G.S."/>
            <person name="Heidelberg J.F."/>
            <person name="Badger J.H."/>
            <person name="Madupu R."/>
            <person name="Nelson W.C."/>
            <person name="Brinkac L.M."/>
            <person name="Dodson R.J."/>
            <person name="Durkin A.S."/>
            <person name="Daugherty S.C."/>
            <person name="Sullivan S.A."/>
            <person name="Khouri H."/>
            <person name="Mohamoud Y."/>
            <person name="Halpin R."/>
            <person name="Paulsen I.T."/>
        </authorList>
    </citation>
    <scope>NUCLEOTIDE SEQUENCE [LARGE SCALE GENOMIC DNA]</scope>
    <source>
        <strain>CC9311</strain>
    </source>
</reference>
<gene>
    <name evidence="1" type="primary">pnp</name>
    <name type="ordered locus">sync_2088</name>
</gene>
<evidence type="ECO:0000255" key="1">
    <source>
        <dbReference type="HAMAP-Rule" id="MF_01595"/>
    </source>
</evidence>
<evidence type="ECO:0000256" key="2">
    <source>
        <dbReference type="SAM" id="MobiDB-lite"/>
    </source>
</evidence>
<comment type="function">
    <text evidence="1">Involved in mRNA degradation. Catalyzes the phosphorolysis of single-stranded polyribonucleotides processively in the 3'- to 5'-direction.</text>
</comment>
<comment type="catalytic activity">
    <reaction evidence="1">
        <text>RNA(n+1) + phosphate = RNA(n) + a ribonucleoside 5'-diphosphate</text>
        <dbReference type="Rhea" id="RHEA:22096"/>
        <dbReference type="Rhea" id="RHEA-COMP:14527"/>
        <dbReference type="Rhea" id="RHEA-COMP:17342"/>
        <dbReference type="ChEBI" id="CHEBI:43474"/>
        <dbReference type="ChEBI" id="CHEBI:57930"/>
        <dbReference type="ChEBI" id="CHEBI:140395"/>
        <dbReference type="EC" id="2.7.7.8"/>
    </reaction>
</comment>
<comment type="cofactor">
    <cofactor evidence="1">
        <name>Mg(2+)</name>
        <dbReference type="ChEBI" id="CHEBI:18420"/>
    </cofactor>
</comment>
<comment type="subcellular location">
    <subcellularLocation>
        <location evidence="1">Cytoplasm</location>
    </subcellularLocation>
</comment>
<comment type="similarity">
    <text evidence="1">Belongs to the polyribonucleotide nucleotidyltransferase family.</text>
</comment>
<sequence length="721" mass="77706">MQGQTQSISFDGREIRLTTGRYAPQAGGSVMIECGDTSVLVTATRSKGRDGIDFLPLICDYEERLYAAGRIPGSFMRRESRPPERATLICRLIDRPMRPLFPSWLRDDLQIVATCMSLDERVPADVLAVTGASMATLLAKIPFYGPMAAVRVGLLGDDFVLNPSYREIERGDLDLVVAGTPQGVVMVEAGANQLPEGDVIEAIDFGYEAVSELIKAQQSILKEAGIEQVIPEAPEQDKTLPVYLEKACSKSIGEVLGQFEQTKAERDEKLDAIRSTTAETIQGLKDSDPVRVAVSANGKALPNSFKALTKTLMRQQILKDGKRVDGRNLDQVRPISAAAGVLPKRVHGSGLFQRGLTQVLSTATLGTPSDAQEMDDLNPSNEKTYLHHYNFPAYSVGETRPMRSPGRREIGHGALAERAIVPVLPAKDTFPYVVRVVSEVLSSNGSTSMGSVCGSTLALMDAGVPLKSPVSGAAMGLIKEGDEVKILTDIQGIEDFLVDMDFKVAGTDKGITALQMDMKITGLPVSIVADAVNQARPARLHILEKMMEAIESPREGLSPHAPRLLSFRIDPELIGTVIGPGGRTIKNITERTNTKIDIEDSGIVTIASHDGAAAEEAQKIIEGLTRKVNEGEVFTGSITRIIPIGAFVEILPGKEGMIHISQLSEARVEKVEDVVKVGDEVTVRVREIDNRGRINLTLRGVPQSGESADSQPAPTPVAPLS</sequence>
<accession>Q0I8D2</accession>
<feature type="chain" id="PRO_0000329896" description="Polyribonucleotide nucleotidyltransferase">
    <location>
        <begin position="1"/>
        <end position="721"/>
    </location>
</feature>
<feature type="domain" description="KH" evidence="1">
    <location>
        <begin position="562"/>
        <end position="621"/>
    </location>
</feature>
<feature type="domain" description="S1 motif" evidence="1">
    <location>
        <begin position="631"/>
        <end position="699"/>
    </location>
</feature>
<feature type="region of interest" description="Disordered" evidence="2">
    <location>
        <begin position="700"/>
        <end position="721"/>
    </location>
</feature>
<feature type="binding site" evidence="1">
    <location>
        <position position="495"/>
    </location>
    <ligand>
        <name>Mg(2+)</name>
        <dbReference type="ChEBI" id="CHEBI:18420"/>
    </ligand>
</feature>
<feature type="binding site" evidence="1">
    <location>
        <position position="501"/>
    </location>
    <ligand>
        <name>Mg(2+)</name>
        <dbReference type="ChEBI" id="CHEBI:18420"/>
    </ligand>
</feature>
<dbReference type="EC" id="2.7.7.8" evidence="1"/>
<dbReference type="EMBL" id="CP000435">
    <property type="protein sequence ID" value="ABI46317.1"/>
    <property type="molecule type" value="Genomic_DNA"/>
</dbReference>
<dbReference type="RefSeq" id="WP_011620002.1">
    <property type="nucleotide sequence ID" value="NC_008319.1"/>
</dbReference>
<dbReference type="SMR" id="Q0I8D2"/>
<dbReference type="STRING" id="64471.sync_2088"/>
<dbReference type="KEGG" id="syg:sync_2088"/>
<dbReference type="eggNOG" id="COG1185">
    <property type="taxonomic scope" value="Bacteria"/>
</dbReference>
<dbReference type="HOGENOM" id="CLU_004217_2_2_3"/>
<dbReference type="OrthoDB" id="9804305at2"/>
<dbReference type="Proteomes" id="UP000001961">
    <property type="component" value="Chromosome"/>
</dbReference>
<dbReference type="GO" id="GO:0005829">
    <property type="term" value="C:cytosol"/>
    <property type="evidence" value="ECO:0007669"/>
    <property type="project" value="TreeGrafter"/>
</dbReference>
<dbReference type="GO" id="GO:0000175">
    <property type="term" value="F:3'-5'-RNA exonuclease activity"/>
    <property type="evidence" value="ECO:0007669"/>
    <property type="project" value="TreeGrafter"/>
</dbReference>
<dbReference type="GO" id="GO:0000287">
    <property type="term" value="F:magnesium ion binding"/>
    <property type="evidence" value="ECO:0007669"/>
    <property type="project" value="UniProtKB-UniRule"/>
</dbReference>
<dbReference type="GO" id="GO:0004654">
    <property type="term" value="F:polyribonucleotide nucleotidyltransferase activity"/>
    <property type="evidence" value="ECO:0007669"/>
    <property type="project" value="UniProtKB-UniRule"/>
</dbReference>
<dbReference type="GO" id="GO:0003723">
    <property type="term" value="F:RNA binding"/>
    <property type="evidence" value="ECO:0007669"/>
    <property type="project" value="UniProtKB-UniRule"/>
</dbReference>
<dbReference type="GO" id="GO:0006402">
    <property type="term" value="P:mRNA catabolic process"/>
    <property type="evidence" value="ECO:0007669"/>
    <property type="project" value="UniProtKB-UniRule"/>
</dbReference>
<dbReference type="GO" id="GO:0006396">
    <property type="term" value="P:RNA processing"/>
    <property type="evidence" value="ECO:0007669"/>
    <property type="project" value="InterPro"/>
</dbReference>
<dbReference type="CDD" id="cd02393">
    <property type="entry name" value="KH-I_PNPase"/>
    <property type="match status" value="1"/>
</dbReference>
<dbReference type="CDD" id="cd11363">
    <property type="entry name" value="RNase_PH_PNPase_1"/>
    <property type="match status" value="1"/>
</dbReference>
<dbReference type="CDD" id="cd11364">
    <property type="entry name" value="RNase_PH_PNPase_2"/>
    <property type="match status" value="1"/>
</dbReference>
<dbReference type="FunFam" id="2.40.50.140:FF:000023">
    <property type="entry name" value="Polyribonucleotide nucleotidyltransferase"/>
    <property type="match status" value="1"/>
</dbReference>
<dbReference type="FunFam" id="3.30.1370.10:FF:000001">
    <property type="entry name" value="Polyribonucleotide nucleotidyltransferase"/>
    <property type="match status" value="1"/>
</dbReference>
<dbReference type="FunFam" id="3.30.230.70:FF:000001">
    <property type="entry name" value="Polyribonucleotide nucleotidyltransferase"/>
    <property type="match status" value="1"/>
</dbReference>
<dbReference type="FunFam" id="3.30.230.70:FF:000002">
    <property type="entry name" value="Polyribonucleotide nucleotidyltransferase"/>
    <property type="match status" value="1"/>
</dbReference>
<dbReference type="Gene3D" id="3.30.230.70">
    <property type="entry name" value="GHMP Kinase, N-terminal domain"/>
    <property type="match status" value="2"/>
</dbReference>
<dbReference type="Gene3D" id="3.30.1370.10">
    <property type="entry name" value="K Homology domain, type 1"/>
    <property type="match status" value="1"/>
</dbReference>
<dbReference type="Gene3D" id="2.40.50.140">
    <property type="entry name" value="Nucleic acid-binding proteins"/>
    <property type="match status" value="1"/>
</dbReference>
<dbReference type="HAMAP" id="MF_01595">
    <property type="entry name" value="PNPase"/>
    <property type="match status" value="1"/>
</dbReference>
<dbReference type="InterPro" id="IPR001247">
    <property type="entry name" value="ExoRNase_PH_dom1"/>
</dbReference>
<dbReference type="InterPro" id="IPR015847">
    <property type="entry name" value="ExoRNase_PH_dom2"/>
</dbReference>
<dbReference type="InterPro" id="IPR036345">
    <property type="entry name" value="ExoRNase_PH_dom2_sf"/>
</dbReference>
<dbReference type="InterPro" id="IPR004087">
    <property type="entry name" value="KH_dom"/>
</dbReference>
<dbReference type="InterPro" id="IPR004088">
    <property type="entry name" value="KH_dom_type_1"/>
</dbReference>
<dbReference type="InterPro" id="IPR036612">
    <property type="entry name" value="KH_dom_type_1_sf"/>
</dbReference>
<dbReference type="InterPro" id="IPR012340">
    <property type="entry name" value="NA-bd_OB-fold"/>
</dbReference>
<dbReference type="InterPro" id="IPR012162">
    <property type="entry name" value="PNPase"/>
</dbReference>
<dbReference type="InterPro" id="IPR027408">
    <property type="entry name" value="PNPase/RNase_PH_dom_sf"/>
</dbReference>
<dbReference type="InterPro" id="IPR015848">
    <property type="entry name" value="PNPase_PH_RNA-bd_bac/org-type"/>
</dbReference>
<dbReference type="InterPro" id="IPR020568">
    <property type="entry name" value="Ribosomal_Su5_D2-typ_SF"/>
</dbReference>
<dbReference type="InterPro" id="IPR003029">
    <property type="entry name" value="S1_domain"/>
</dbReference>
<dbReference type="NCBIfam" id="TIGR03591">
    <property type="entry name" value="polynuc_phos"/>
    <property type="match status" value="1"/>
</dbReference>
<dbReference type="NCBIfam" id="NF008805">
    <property type="entry name" value="PRK11824.1"/>
    <property type="match status" value="1"/>
</dbReference>
<dbReference type="PANTHER" id="PTHR11252">
    <property type="entry name" value="POLYRIBONUCLEOTIDE NUCLEOTIDYLTRANSFERASE"/>
    <property type="match status" value="1"/>
</dbReference>
<dbReference type="PANTHER" id="PTHR11252:SF0">
    <property type="entry name" value="POLYRIBONUCLEOTIDE NUCLEOTIDYLTRANSFERASE 1, MITOCHONDRIAL"/>
    <property type="match status" value="1"/>
</dbReference>
<dbReference type="Pfam" id="PF00013">
    <property type="entry name" value="KH_1"/>
    <property type="match status" value="1"/>
</dbReference>
<dbReference type="Pfam" id="PF03726">
    <property type="entry name" value="PNPase"/>
    <property type="match status" value="1"/>
</dbReference>
<dbReference type="Pfam" id="PF01138">
    <property type="entry name" value="RNase_PH"/>
    <property type="match status" value="2"/>
</dbReference>
<dbReference type="Pfam" id="PF03725">
    <property type="entry name" value="RNase_PH_C"/>
    <property type="match status" value="1"/>
</dbReference>
<dbReference type="Pfam" id="PF00575">
    <property type="entry name" value="S1"/>
    <property type="match status" value="1"/>
</dbReference>
<dbReference type="PIRSF" id="PIRSF005499">
    <property type="entry name" value="PNPase"/>
    <property type="match status" value="1"/>
</dbReference>
<dbReference type="SMART" id="SM00322">
    <property type="entry name" value="KH"/>
    <property type="match status" value="1"/>
</dbReference>
<dbReference type="SMART" id="SM00316">
    <property type="entry name" value="S1"/>
    <property type="match status" value="1"/>
</dbReference>
<dbReference type="SUPFAM" id="SSF54791">
    <property type="entry name" value="Eukaryotic type KH-domain (KH-domain type I)"/>
    <property type="match status" value="1"/>
</dbReference>
<dbReference type="SUPFAM" id="SSF50249">
    <property type="entry name" value="Nucleic acid-binding proteins"/>
    <property type="match status" value="1"/>
</dbReference>
<dbReference type="SUPFAM" id="SSF55666">
    <property type="entry name" value="Ribonuclease PH domain 2-like"/>
    <property type="match status" value="2"/>
</dbReference>
<dbReference type="SUPFAM" id="SSF54211">
    <property type="entry name" value="Ribosomal protein S5 domain 2-like"/>
    <property type="match status" value="2"/>
</dbReference>
<dbReference type="PROSITE" id="PS50084">
    <property type="entry name" value="KH_TYPE_1"/>
    <property type="match status" value="1"/>
</dbReference>
<dbReference type="PROSITE" id="PS50126">
    <property type="entry name" value="S1"/>
    <property type="match status" value="1"/>
</dbReference>
<protein>
    <recommendedName>
        <fullName evidence="1">Polyribonucleotide nucleotidyltransferase</fullName>
        <ecNumber evidence="1">2.7.7.8</ecNumber>
    </recommendedName>
    <alternativeName>
        <fullName evidence="1">Polynucleotide phosphorylase</fullName>
        <shortName evidence="1">PNPase</shortName>
    </alternativeName>
</protein>
<keyword id="KW-0963">Cytoplasm</keyword>
<keyword id="KW-0460">Magnesium</keyword>
<keyword id="KW-0479">Metal-binding</keyword>
<keyword id="KW-0548">Nucleotidyltransferase</keyword>
<keyword id="KW-1185">Reference proteome</keyword>
<keyword id="KW-0694">RNA-binding</keyword>
<keyword id="KW-0808">Transferase</keyword>
<organism>
    <name type="scientific">Synechococcus sp. (strain CC9311)</name>
    <dbReference type="NCBI Taxonomy" id="64471"/>
    <lineage>
        <taxon>Bacteria</taxon>
        <taxon>Bacillati</taxon>
        <taxon>Cyanobacteriota</taxon>
        <taxon>Cyanophyceae</taxon>
        <taxon>Synechococcales</taxon>
        <taxon>Synechococcaceae</taxon>
        <taxon>Synechococcus</taxon>
    </lineage>
</organism>